<proteinExistence type="inferred from homology"/>
<organism>
    <name type="scientific">Alteromonas mediterranea (strain DSM 17117 / CIP 110805 / LMG 28347 / Deep ecotype)</name>
    <dbReference type="NCBI Taxonomy" id="1774373"/>
    <lineage>
        <taxon>Bacteria</taxon>
        <taxon>Pseudomonadati</taxon>
        <taxon>Pseudomonadota</taxon>
        <taxon>Gammaproteobacteria</taxon>
        <taxon>Alteromonadales</taxon>
        <taxon>Alteromonadaceae</taxon>
        <taxon>Alteromonas/Salinimonas group</taxon>
        <taxon>Alteromonas</taxon>
    </lineage>
</organism>
<accession>B4S2C3</accession>
<accession>F2G1V5</accession>
<reference key="1">
    <citation type="journal article" date="2008" name="ISME J.">
        <title>Comparative genomics of two ecotypes of the marine planktonic copiotroph Alteromonas macleodii suggests alternative lifestyles associated with different kinds of particulate organic matter.</title>
        <authorList>
            <person name="Ivars-Martinez E."/>
            <person name="Martin-Cuadrado A.-B."/>
            <person name="D'Auria G."/>
            <person name="Mira A."/>
            <person name="Ferriera S."/>
            <person name="Johnson J."/>
            <person name="Friedman R."/>
            <person name="Rodriguez-Valera F."/>
        </authorList>
    </citation>
    <scope>NUCLEOTIDE SEQUENCE [LARGE SCALE GENOMIC DNA]</scope>
    <source>
        <strain>DSM 17117 / CIP 110805 / LMG 28347 / Deep ecotype</strain>
    </source>
</reference>
<feature type="chain" id="PRO_1000121577" description="Large ribosomal subunit protein bL28">
    <location>
        <begin position="1"/>
        <end position="78"/>
    </location>
</feature>
<feature type="region of interest" description="Disordered" evidence="2">
    <location>
        <begin position="1"/>
        <end position="25"/>
    </location>
</feature>
<gene>
    <name evidence="1" type="primary">rpmB</name>
    <name type="ordered locus">MADE_1000265</name>
</gene>
<name>RL28_ALTMD</name>
<keyword id="KW-0687">Ribonucleoprotein</keyword>
<keyword id="KW-0689">Ribosomal protein</keyword>
<dbReference type="EMBL" id="CP001103">
    <property type="protein sequence ID" value="AEA96202.1"/>
    <property type="molecule type" value="Genomic_DNA"/>
</dbReference>
<dbReference type="RefSeq" id="WP_012516576.1">
    <property type="nucleotide sequence ID" value="NC_011138.3"/>
</dbReference>
<dbReference type="SMR" id="B4S2C3"/>
<dbReference type="GeneID" id="56340677"/>
<dbReference type="KEGG" id="amc:MADE_1000265"/>
<dbReference type="HOGENOM" id="CLU_064548_3_1_6"/>
<dbReference type="Proteomes" id="UP000001870">
    <property type="component" value="Chromosome"/>
</dbReference>
<dbReference type="GO" id="GO:1990904">
    <property type="term" value="C:ribonucleoprotein complex"/>
    <property type="evidence" value="ECO:0007669"/>
    <property type="project" value="UniProtKB-KW"/>
</dbReference>
<dbReference type="GO" id="GO:0005840">
    <property type="term" value="C:ribosome"/>
    <property type="evidence" value="ECO:0007669"/>
    <property type="project" value="UniProtKB-KW"/>
</dbReference>
<dbReference type="GO" id="GO:0003735">
    <property type="term" value="F:structural constituent of ribosome"/>
    <property type="evidence" value="ECO:0007669"/>
    <property type="project" value="InterPro"/>
</dbReference>
<dbReference type="GO" id="GO:0006412">
    <property type="term" value="P:translation"/>
    <property type="evidence" value="ECO:0007669"/>
    <property type="project" value="UniProtKB-UniRule"/>
</dbReference>
<dbReference type="FunFam" id="2.30.170.40:FF:000001">
    <property type="entry name" value="50S ribosomal protein L28"/>
    <property type="match status" value="1"/>
</dbReference>
<dbReference type="Gene3D" id="2.30.170.40">
    <property type="entry name" value="Ribosomal protein L28/L24"/>
    <property type="match status" value="1"/>
</dbReference>
<dbReference type="HAMAP" id="MF_00373">
    <property type="entry name" value="Ribosomal_bL28"/>
    <property type="match status" value="1"/>
</dbReference>
<dbReference type="InterPro" id="IPR026569">
    <property type="entry name" value="Ribosomal_bL28"/>
</dbReference>
<dbReference type="InterPro" id="IPR034704">
    <property type="entry name" value="Ribosomal_bL28/bL31-like_sf"/>
</dbReference>
<dbReference type="InterPro" id="IPR001383">
    <property type="entry name" value="Ribosomal_bL28_bact-type"/>
</dbReference>
<dbReference type="InterPro" id="IPR037147">
    <property type="entry name" value="Ribosomal_bL28_sf"/>
</dbReference>
<dbReference type="NCBIfam" id="TIGR00009">
    <property type="entry name" value="L28"/>
    <property type="match status" value="1"/>
</dbReference>
<dbReference type="Pfam" id="PF00830">
    <property type="entry name" value="Ribosomal_L28"/>
    <property type="match status" value="1"/>
</dbReference>
<dbReference type="SUPFAM" id="SSF143800">
    <property type="entry name" value="L28p-like"/>
    <property type="match status" value="1"/>
</dbReference>
<comment type="similarity">
    <text evidence="1">Belongs to the bacterial ribosomal protein bL28 family.</text>
</comment>
<protein>
    <recommendedName>
        <fullName evidence="1">Large ribosomal subunit protein bL28</fullName>
    </recommendedName>
    <alternativeName>
        <fullName evidence="3">50S ribosomal protein L28</fullName>
    </alternativeName>
</protein>
<sequence>MSRVCQVTGKRPTVGNNRSHARNATRRRFLPNLQTHRFWVESESRFVKLRLSAKGMRIIDKKGIDSVLTDIRARGEKI</sequence>
<evidence type="ECO:0000255" key="1">
    <source>
        <dbReference type="HAMAP-Rule" id="MF_00373"/>
    </source>
</evidence>
<evidence type="ECO:0000256" key="2">
    <source>
        <dbReference type="SAM" id="MobiDB-lite"/>
    </source>
</evidence>
<evidence type="ECO:0000305" key="3"/>